<gene>
    <name type="ordered locus">NGO_0425</name>
</gene>
<protein>
    <recommendedName>
        <fullName evidence="1">Ancillary SecYEG translocon subunit</fullName>
    </recommendedName>
    <alternativeName>
        <fullName>ORF2</fullName>
    </alternativeName>
    <alternativeName>
        <fullName evidence="1">Periplasmic chaperone YfgM</fullName>
    </alternativeName>
</protein>
<sequence>MAAHLEEQQELDNFKYFWKTTGKWLFALLILAALGYLGYTVYQNRAASQNQEAAAVLANIVEKAQNKAPQSEINAELSKLQQSYPHSISAAQATLMAAATEFDAQRYDVAEGHLKWVLSNQKDSLIQALAAQRLGVVLLQQKKYDAALAALDTPVEADFAPLLMETKGDVYAAQEKSQEALKNYGQALEKMPQDSVGRELLQMKLDSLK</sequence>
<dbReference type="EMBL" id="AF058711">
    <property type="protein sequence ID" value="AAC63507.1"/>
    <property type="molecule type" value="Genomic_DNA"/>
</dbReference>
<dbReference type="EMBL" id="AE004969">
    <property type="protein sequence ID" value="AAW89168.1"/>
    <property type="molecule type" value="Genomic_DNA"/>
</dbReference>
<dbReference type="RefSeq" id="WP_003690875.1">
    <property type="nucleotide sequence ID" value="NC_002946.2"/>
</dbReference>
<dbReference type="RefSeq" id="YP_207580.1">
    <property type="nucleotide sequence ID" value="NC_002946.2"/>
</dbReference>
<dbReference type="SMR" id="O87406"/>
<dbReference type="STRING" id="242231.NGO_0425"/>
<dbReference type="KEGG" id="ngo:NGO_0425"/>
<dbReference type="PATRIC" id="fig|242231.10.peg.509"/>
<dbReference type="HOGENOM" id="CLU_084785_1_1_4"/>
<dbReference type="Proteomes" id="UP000000535">
    <property type="component" value="Chromosome"/>
</dbReference>
<dbReference type="GO" id="GO:0005886">
    <property type="term" value="C:plasma membrane"/>
    <property type="evidence" value="ECO:0007669"/>
    <property type="project" value="UniProtKB-SubCell"/>
</dbReference>
<dbReference type="GO" id="GO:0044877">
    <property type="term" value="F:protein-containing complex binding"/>
    <property type="evidence" value="ECO:0007669"/>
    <property type="project" value="InterPro"/>
</dbReference>
<dbReference type="Gene3D" id="1.25.40.10">
    <property type="entry name" value="Tetratricopeptide repeat domain"/>
    <property type="match status" value="1"/>
</dbReference>
<dbReference type="InterPro" id="IPR018704">
    <property type="entry name" value="SecYEG/CpoB_TPR"/>
</dbReference>
<dbReference type="InterPro" id="IPR011990">
    <property type="entry name" value="TPR-like_helical_dom_sf"/>
</dbReference>
<dbReference type="InterPro" id="IPR019734">
    <property type="entry name" value="TPR_rpt"/>
</dbReference>
<dbReference type="InterPro" id="IPR026039">
    <property type="entry name" value="YfgM"/>
</dbReference>
<dbReference type="PANTHER" id="PTHR38035:SF1">
    <property type="entry name" value="ANCILLARY SECYEG TRANSLOCON SUBUNIT"/>
    <property type="match status" value="1"/>
</dbReference>
<dbReference type="PANTHER" id="PTHR38035">
    <property type="entry name" value="UPF0070 PROTEIN YFGM"/>
    <property type="match status" value="1"/>
</dbReference>
<dbReference type="Pfam" id="PF09976">
    <property type="entry name" value="TPR_21"/>
    <property type="match status" value="1"/>
</dbReference>
<dbReference type="PIRSF" id="PIRSF006170">
    <property type="entry name" value="YfgM"/>
    <property type="match status" value="1"/>
</dbReference>
<dbReference type="SUPFAM" id="SSF48452">
    <property type="entry name" value="TPR-like"/>
    <property type="match status" value="1"/>
</dbReference>
<dbReference type="PROSITE" id="PS50005">
    <property type="entry name" value="TPR"/>
    <property type="match status" value="1"/>
</dbReference>
<dbReference type="PROSITE" id="PS50293">
    <property type="entry name" value="TPR_REGION"/>
    <property type="match status" value="1"/>
</dbReference>
<name>YFGM_NEIG1</name>
<organism>
    <name type="scientific">Neisseria gonorrhoeae (strain ATCC 700825 / FA 1090)</name>
    <dbReference type="NCBI Taxonomy" id="242231"/>
    <lineage>
        <taxon>Bacteria</taxon>
        <taxon>Pseudomonadati</taxon>
        <taxon>Pseudomonadota</taxon>
        <taxon>Betaproteobacteria</taxon>
        <taxon>Neisseriales</taxon>
        <taxon>Neisseriaceae</taxon>
        <taxon>Neisseria</taxon>
    </lineage>
</organism>
<reference key="1">
    <citation type="journal article" date="2000" name="Genetics">
        <title>A homologue of the recombination-dependent growth gene, rdgC, is involved in gonococcal pilin antigenic variation.</title>
        <authorList>
            <person name="Mehr I.J."/>
            <person name="Long C.D."/>
            <person name="Serkin C.D."/>
            <person name="Seifert H.S."/>
        </authorList>
    </citation>
    <scope>NUCLEOTIDE SEQUENCE [GENOMIC DNA]</scope>
</reference>
<reference key="2">
    <citation type="submission" date="2003-03" db="EMBL/GenBank/DDBJ databases">
        <title>The complete genome sequence of Neisseria gonorrhoeae.</title>
        <authorList>
            <person name="Lewis L.A."/>
            <person name="Gillaspy A.F."/>
            <person name="McLaughlin R.E."/>
            <person name="Gipson M."/>
            <person name="Ducey T.F."/>
            <person name="Ownbey T."/>
            <person name="Hartman K."/>
            <person name="Nydick C."/>
            <person name="Carson M.B."/>
            <person name="Vaughn J."/>
            <person name="Thomson C."/>
            <person name="Song L."/>
            <person name="Lin S."/>
            <person name="Yuan X."/>
            <person name="Najar F."/>
            <person name="Zhan M."/>
            <person name="Ren Q."/>
            <person name="Zhu H."/>
            <person name="Qi S."/>
            <person name="Kenton S.M."/>
            <person name="Lai H."/>
            <person name="White J.D."/>
            <person name="Clifton S."/>
            <person name="Roe B.A."/>
            <person name="Dyer D.W."/>
        </authorList>
    </citation>
    <scope>NUCLEOTIDE SEQUENCE [LARGE SCALE GENOMIC DNA]</scope>
    <source>
        <strain>ATCC 700825 / FA 1090</strain>
    </source>
</reference>
<proteinExistence type="inferred from homology"/>
<comment type="function">
    <text evidence="1">May mediate protein transfer from the SecYEG translocon to the periplasmic chaperone network via its periplasmic C-terminal region.</text>
</comment>
<comment type="subunit">
    <text evidence="1">Interacts with the SecYEG translocon (By similarity). Forms a complex with PpiD (By similarity).</text>
</comment>
<comment type="subcellular location">
    <subcellularLocation>
        <location evidence="1">Cell inner membrane</location>
        <topology evidence="1">Single-pass type II membrane protein</topology>
        <orientation evidence="1">Periplasmic side</orientation>
    </subcellularLocation>
</comment>
<comment type="similarity">
    <text evidence="3">Belongs to the YfgM family.</text>
</comment>
<evidence type="ECO:0000250" key="1">
    <source>
        <dbReference type="UniProtKB" id="P76576"/>
    </source>
</evidence>
<evidence type="ECO:0000255" key="2"/>
<evidence type="ECO:0000305" key="3"/>
<feature type="chain" id="PRO_0000214366" description="Ancillary SecYEG translocon subunit">
    <location>
        <begin position="1"/>
        <end position="209"/>
    </location>
</feature>
<feature type="topological domain" description="Cytoplasmic" evidence="1">
    <location>
        <begin position="1"/>
        <end position="23"/>
    </location>
</feature>
<feature type="transmembrane region" description="Helical" evidence="2">
    <location>
        <begin position="24"/>
        <end position="42"/>
    </location>
</feature>
<feature type="topological domain" description="Periplasmic" evidence="1">
    <location>
        <begin position="43"/>
        <end position="209"/>
    </location>
</feature>
<feature type="repeat" description="TPR">
    <location>
        <begin position="161"/>
        <end position="194"/>
    </location>
</feature>
<accession>O87406</accession>
<accession>Q5F9G9</accession>
<keyword id="KW-0997">Cell inner membrane</keyword>
<keyword id="KW-1003">Cell membrane</keyword>
<keyword id="KW-0143">Chaperone</keyword>
<keyword id="KW-0472">Membrane</keyword>
<keyword id="KW-1185">Reference proteome</keyword>
<keyword id="KW-0802">TPR repeat</keyword>
<keyword id="KW-0812">Transmembrane</keyword>
<keyword id="KW-1133">Transmembrane helix</keyword>